<feature type="chain" id="PRO_0000388381" description="Probable glutamine--tRNA ligase">
    <location>
        <begin position="1"/>
        <end position="697"/>
    </location>
</feature>
<feature type="short sequence motif" description="'HIGH' region" evidence="1">
    <location>
        <begin position="204"/>
        <end position="214"/>
    </location>
</feature>
<feature type="short sequence motif" description="'KMSKS' region" evidence="1">
    <location>
        <begin position="441"/>
        <end position="445"/>
    </location>
</feature>
<feature type="binding site" evidence="2">
    <location>
        <begin position="205"/>
        <end position="207"/>
    </location>
    <ligand>
        <name>ATP</name>
        <dbReference type="ChEBI" id="CHEBI:30616"/>
    </ligand>
</feature>
<feature type="binding site" evidence="2">
    <location>
        <begin position="211"/>
        <end position="217"/>
    </location>
    <ligand>
        <name>ATP</name>
        <dbReference type="ChEBI" id="CHEBI:30616"/>
    </ligand>
</feature>
<feature type="binding site" evidence="2">
    <location>
        <position position="237"/>
    </location>
    <ligand>
        <name>L-glutamine</name>
        <dbReference type="ChEBI" id="CHEBI:58359"/>
    </ligand>
</feature>
<feature type="binding site" evidence="2">
    <location>
        <position position="386"/>
    </location>
    <ligand>
        <name>L-glutamine</name>
        <dbReference type="ChEBI" id="CHEBI:58359"/>
    </ligand>
</feature>
<feature type="binding site" evidence="2">
    <location>
        <position position="405"/>
    </location>
    <ligand>
        <name>ATP</name>
        <dbReference type="ChEBI" id="CHEBI:30616"/>
    </ligand>
</feature>
<feature type="binding site" evidence="2">
    <location>
        <begin position="434"/>
        <end position="435"/>
    </location>
    <ligand>
        <name>ATP</name>
        <dbReference type="ChEBI" id="CHEBI:30616"/>
    </ligand>
</feature>
<feature type="binding site" evidence="2">
    <location>
        <begin position="442"/>
        <end position="444"/>
    </location>
    <ligand>
        <name>ATP</name>
        <dbReference type="ChEBI" id="CHEBI:30616"/>
    </ligand>
</feature>
<comment type="catalytic activity">
    <reaction evidence="3">
        <text>tRNA(Gln) + L-glutamine + ATP = L-glutaminyl-tRNA(Gln) + AMP + diphosphate</text>
        <dbReference type="Rhea" id="RHEA:20121"/>
        <dbReference type="Rhea" id="RHEA-COMP:9662"/>
        <dbReference type="Rhea" id="RHEA-COMP:9681"/>
        <dbReference type="ChEBI" id="CHEBI:30616"/>
        <dbReference type="ChEBI" id="CHEBI:33019"/>
        <dbReference type="ChEBI" id="CHEBI:58359"/>
        <dbReference type="ChEBI" id="CHEBI:78442"/>
        <dbReference type="ChEBI" id="CHEBI:78521"/>
        <dbReference type="ChEBI" id="CHEBI:456215"/>
        <dbReference type="EC" id="6.1.1.18"/>
    </reaction>
</comment>
<comment type="similarity">
    <text evidence="4">Belongs to the class-I aminoacyl-tRNA synthetase family.</text>
</comment>
<reference key="1">
    <citation type="journal article" date="2001" name="Nature">
        <title>Genome sequence and gene compaction of the eukaryote parasite Encephalitozoon cuniculi.</title>
        <authorList>
            <person name="Katinka M.D."/>
            <person name="Duprat S."/>
            <person name="Cornillot E."/>
            <person name="Metenier G."/>
            <person name="Thomarat F."/>
            <person name="Prensier G."/>
            <person name="Barbe V."/>
            <person name="Peyretaillade E."/>
            <person name="Brottier P."/>
            <person name="Wincker P."/>
            <person name="Delbac F."/>
            <person name="El Alaoui H."/>
            <person name="Peyret P."/>
            <person name="Saurin W."/>
            <person name="Gouy M."/>
            <person name="Weissenbach J."/>
            <person name="Vivares C.P."/>
        </authorList>
    </citation>
    <scope>NUCLEOTIDE SEQUENCE [LARGE SCALE GENOMIC DNA]</scope>
    <source>
        <strain>GB-M1</strain>
    </source>
</reference>
<gene>
    <name type="ordered locus">ECU10_1460</name>
</gene>
<accession>Q8SR10</accession>
<keyword id="KW-0030">Aminoacyl-tRNA synthetase</keyword>
<keyword id="KW-0067">ATP-binding</keyword>
<keyword id="KW-0436">Ligase</keyword>
<keyword id="KW-0547">Nucleotide-binding</keyword>
<keyword id="KW-0648">Protein biosynthesis</keyword>
<keyword id="KW-1185">Reference proteome</keyword>
<sequence>MADLEKILERLGISPEKRCQVIKKEQVVRNMEKIFLGRDLSNRLLYTLACIAPKNADLGLLADLVDARVIKHESMLKECLRYTEKKDVSMEEMTRFVKRNEVSSEDVRKFVAKMRSDRVAKKDMVSKARKAMPCADFRVVVEEINKVPDDVDGGDEKRPLEGGWLEEGEIKKLPKPSEIPQINEEIRQAHLRRTGGRVVTRFPPEPNGILHIGHAKAINLNFEYAKKFGGYTYLRYDDTNPKNEEAEYFDSIYEDVRWLGFEPYKVTASSDYFDKMTEFGFQLIRKGKAYVCHLSQDEICERRRQYVSDGTNDRSHLSQYRDRPVSENLRLFQEMVDGKWEEGKACLRFKMDTDTKNPLMLDLVGIRILDVVHPRKNVKYTVYPTYEFALCVSDSLEDVTHSFCTREFYTRQESYNWLLVQLEIYKPIQWEFSRLNISNTVLSKRKLLPLKKYGIELDDPRLFTIKGMRRRGFPPEAINQFCRSLGFTFAETTVDVKKLENFVRDNLNRTSRRIMCVKEPLKVTIMNSTPCSISIPDLPGSSVVRDVPFTPVIYIEKSDFMEKGDKDFLRLTPEQPVGLYMLYPIRVVKVTPDGIVAERWDGVPRKFIHWVSEDSVEVEMRMYSSLWTSFSPKDATYLEEMNKDSLKVFHGLCDKRISDARIEDRFQFQRIGYFCVDKDTTKENIVVNLTIPLKNIA</sequence>
<name>SYQ_ENCCU</name>
<organism>
    <name type="scientific">Encephalitozoon cuniculi (strain GB-M1)</name>
    <name type="common">Microsporidian parasite</name>
    <dbReference type="NCBI Taxonomy" id="284813"/>
    <lineage>
        <taxon>Eukaryota</taxon>
        <taxon>Fungi</taxon>
        <taxon>Fungi incertae sedis</taxon>
        <taxon>Microsporidia</taxon>
        <taxon>Unikaryonidae</taxon>
        <taxon>Encephalitozoon</taxon>
    </lineage>
</organism>
<dbReference type="EC" id="6.1.1.18" evidence="3"/>
<dbReference type="EMBL" id="AL590449">
    <property type="protein sequence ID" value="CAD25865.1"/>
    <property type="molecule type" value="Genomic_DNA"/>
</dbReference>
<dbReference type="RefSeq" id="NP_586261.1">
    <property type="nucleotide sequence ID" value="NM_001042094.1"/>
</dbReference>
<dbReference type="SMR" id="Q8SR10"/>
<dbReference type="FunCoup" id="Q8SR10">
    <property type="interactions" value="333"/>
</dbReference>
<dbReference type="STRING" id="284813.Q8SR10"/>
<dbReference type="GeneID" id="859911"/>
<dbReference type="KEGG" id="ecu:ECU10_1460"/>
<dbReference type="VEuPathDB" id="MicrosporidiaDB:ECU10_1460"/>
<dbReference type="HOGENOM" id="CLU_001882_2_3_1"/>
<dbReference type="InParanoid" id="Q8SR10"/>
<dbReference type="OMA" id="FAWRIMG"/>
<dbReference type="OrthoDB" id="10250478at2759"/>
<dbReference type="Proteomes" id="UP000000819">
    <property type="component" value="Chromosome X"/>
</dbReference>
<dbReference type="GO" id="GO:0005829">
    <property type="term" value="C:cytosol"/>
    <property type="evidence" value="ECO:0007669"/>
    <property type="project" value="TreeGrafter"/>
</dbReference>
<dbReference type="GO" id="GO:0005524">
    <property type="term" value="F:ATP binding"/>
    <property type="evidence" value="ECO:0007669"/>
    <property type="project" value="UniProtKB-KW"/>
</dbReference>
<dbReference type="GO" id="GO:0004819">
    <property type="term" value="F:glutamine-tRNA ligase activity"/>
    <property type="evidence" value="ECO:0007669"/>
    <property type="project" value="UniProtKB-EC"/>
</dbReference>
<dbReference type="GO" id="GO:0006425">
    <property type="term" value="P:glutaminyl-tRNA aminoacylation"/>
    <property type="evidence" value="ECO:0007669"/>
    <property type="project" value="InterPro"/>
</dbReference>
<dbReference type="CDD" id="cd00807">
    <property type="entry name" value="GlnRS_core"/>
    <property type="match status" value="1"/>
</dbReference>
<dbReference type="FunFam" id="3.40.50.620:FF:000037">
    <property type="entry name" value="Glutamine--tRNA ligase cytoplasmic"/>
    <property type="match status" value="1"/>
</dbReference>
<dbReference type="Gene3D" id="3.40.50.620">
    <property type="entry name" value="HUPs"/>
    <property type="match status" value="1"/>
</dbReference>
<dbReference type="Gene3D" id="2.40.240.10">
    <property type="entry name" value="Ribosomal Protein L25, Chain P"/>
    <property type="match status" value="2"/>
</dbReference>
<dbReference type="InterPro" id="IPR001412">
    <property type="entry name" value="aa-tRNA-synth_I_CS"/>
</dbReference>
<dbReference type="InterPro" id="IPR004514">
    <property type="entry name" value="Gln-tRNA-synth"/>
</dbReference>
<dbReference type="InterPro" id="IPR050132">
    <property type="entry name" value="Gln/Glu-tRNA_Ligase"/>
</dbReference>
<dbReference type="InterPro" id="IPR000924">
    <property type="entry name" value="Glu/Gln-tRNA-synth"/>
</dbReference>
<dbReference type="InterPro" id="IPR020058">
    <property type="entry name" value="Glu/Gln-tRNA-synth_Ib_cat-dom"/>
</dbReference>
<dbReference type="InterPro" id="IPR020059">
    <property type="entry name" value="Glu/Gln-tRNA-synth_Ib_codon-bd"/>
</dbReference>
<dbReference type="InterPro" id="IPR020056">
    <property type="entry name" value="Rbsml_bL25/Gln-tRNA_synth_N"/>
</dbReference>
<dbReference type="InterPro" id="IPR011035">
    <property type="entry name" value="Ribosomal_bL25/Gln-tRNA_synth"/>
</dbReference>
<dbReference type="InterPro" id="IPR014729">
    <property type="entry name" value="Rossmann-like_a/b/a_fold"/>
</dbReference>
<dbReference type="InterPro" id="IPR049437">
    <property type="entry name" value="tRNA-synt_1c_C2"/>
</dbReference>
<dbReference type="NCBIfam" id="TIGR00440">
    <property type="entry name" value="glnS"/>
    <property type="match status" value="1"/>
</dbReference>
<dbReference type="PANTHER" id="PTHR43097:SF4">
    <property type="entry name" value="GLUTAMINE--TRNA LIGASE"/>
    <property type="match status" value="1"/>
</dbReference>
<dbReference type="PANTHER" id="PTHR43097">
    <property type="entry name" value="GLUTAMINE-TRNA LIGASE"/>
    <property type="match status" value="1"/>
</dbReference>
<dbReference type="Pfam" id="PF00749">
    <property type="entry name" value="tRNA-synt_1c"/>
    <property type="match status" value="1"/>
</dbReference>
<dbReference type="Pfam" id="PF03950">
    <property type="entry name" value="tRNA-synt_1c_C"/>
    <property type="match status" value="1"/>
</dbReference>
<dbReference type="Pfam" id="PF20974">
    <property type="entry name" value="tRNA-synt_1c_C2"/>
    <property type="match status" value="1"/>
</dbReference>
<dbReference type="PRINTS" id="PR00987">
    <property type="entry name" value="TRNASYNTHGLU"/>
</dbReference>
<dbReference type="SUPFAM" id="SSF52374">
    <property type="entry name" value="Nucleotidylyl transferase"/>
    <property type="match status" value="1"/>
</dbReference>
<dbReference type="SUPFAM" id="SSF50715">
    <property type="entry name" value="Ribosomal protein L25-like"/>
    <property type="match status" value="1"/>
</dbReference>
<dbReference type="PROSITE" id="PS00178">
    <property type="entry name" value="AA_TRNA_LIGASE_I"/>
    <property type="match status" value="1"/>
</dbReference>
<proteinExistence type="inferred from homology"/>
<evidence type="ECO:0000250" key="1"/>
<evidence type="ECO:0000250" key="2">
    <source>
        <dbReference type="UniProtKB" id="P00962"/>
    </source>
</evidence>
<evidence type="ECO:0000250" key="3">
    <source>
        <dbReference type="UniProtKB" id="P47897"/>
    </source>
</evidence>
<evidence type="ECO:0000305" key="4"/>
<protein>
    <recommendedName>
        <fullName>Probable glutamine--tRNA ligase</fullName>
        <ecNumber evidence="3">6.1.1.18</ecNumber>
    </recommendedName>
    <alternativeName>
        <fullName>Glutaminyl-tRNA synthetase</fullName>
        <shortName>GlnRS</shortName>
    </alternativeName>
</protein>